<dbReference type="EMBL" id="CP000675">
    <property type="protein sequence ID" value="ABQ55457.1"/>
    <property type="molecule type" value="Genomic_DNA"/>
</dbReference>
<dbReference type="RefSeq" id="WP_010947740.1">
    <property type="nucleotide sequence ID" value="NZ_JAPMSS010000011.1"/>
</dbReference>
<dbReference type="SMR" id="A5IDK7"/>
<dbReference type="GeneID" id="57036018"/>
<dbReference type="KEGG" id="lpc:LPC_1508"/>
<dbReference type="HOGENOM" id="CLU_017633_0_7_6"/>
<dbReference type="GO" id="GO:0005737">
    <property type="term" value="C:cytoplasm"/>
    <property type="evidence" value="ECO:0007669"/>
    <property type="project" value="UniProtKB-SubCell"/>
</dbReference>
<dbReference type="GO" id="GO:0005524">
    <property type="term" value="F:ATP binding"/>
    <property type="evidence" value="ECO:0007669"/>
    <property type="project" value="InterPro"/>
</dbReference>
<dbReference type="GO" id="GO:0031072">
    <property type="term" value="F:heat shock protein binding"/>
    <property type="evidence" value="ECO:0007669"/>
    <property type="project" value="InterPro"/>
</dbReference>
<dbReference type="GO" id="GO:0051082">
    <property type="term" value="F:unfolded protein binding"/>
    <property type="evidence" value="ECO:0007669"/>
    <property type="project" value="UniProtKB-UniRule"/>
</dbReference>
<dbReference type="GO" id="GO:0008270">
    <property type="term" value="F:zinc ion binding"/>
    <property type="evidence" value="ECO:0007669"/>
    <property type="project" value="UniProtKB-UniRule"/>
</dbReference>
<dbReference type="GO" id="GO:0051085">
    <property type="term" value="P:chaperone cofactor-dependent protein refolding"/>
    <property type="evidence" value="ECO:0007669"/>
    <property type="project" value="TreeGrafter"/>
</dbReference>
<dbReference type="GO" id="GO:0006260">
    <property type="term" value="P:DNA replication"/>
    <property type="evidence" value="ECO:0007669"/>
    <property type="project" value="UniProtKB-KW"/>
</dbReference>
<dbReference type="GO" id="GO:0042026">
    <property type="term" value="P:protein refolding"/>
    <property type="evidence" value="ECO:0007669"/>
    <property type="project" value="TreeGrafter"/>
</dbReference>
<dbReference type="GO" id="GO:0009408">
    <property type="term" value="P:response to heat"/>
    <property type="evidence" value="ECO:0007669"/>
    <property type="project" value="InterPro"/>
</dbReference>
<dbReference type="CDD" id="cd06257">
    <property type="entry name" value="DnaJ"/>
    <property type="match status" value="1"/>
</dbReference>
<dbReference type="CDD" id="cd10747">
    <property type="entry name" value="DnaJ_C"/>
    <property type="match status" value="1"/>
</dbReference>
<dbReference type="CDD" id="cd10719">
    <property type="entry name" value="DnaJ_zf"/>
    <property type="match status" value="1"/>
</dbReference>
<dbReference type="FunFam" id="1.10.287.110:FF:000034">
    <property type="entry name" value="Chaperone protein DnaJ"/>
    <property type="match status" value="1"/>
</dbReference>
<dbReference type="FunFam" id="2.10.230.10:FF:000002">
    <property type="entry name" value="Molecular chaperone DnaJ"/>
    <property type="match status" value="1"/>
</dbReference>
<dbReference type="FunFam" id="2.60.260.20:FF:000004">
    <property type="entry name" value="Molecular chaperone DnaJ"/>
    <property type="match status" value="1"/>
</dbReference>
<dbReference type="Gene3D" id="1.10.287.110">
    <property type="entry name" value="DnaJ domain"/>
    <property type="match status" value="1"/>
</dbReference>
<dbReference type="Gene3D" id="2.10.230.10">
    <property type="entry name" value="Heat shock protein DnaJ, cysteine-rich domain"/>
    <property type="match status" value="1"/>
</dbReference>
<dbReference type="Gene3D" id="2.60.260.20">
    <property type="entry name" value="Urease metallochaperone UreE, N-terminal domain"/>
    <property type="match status" value="2"/>
</dbReference>
<dbReference type="HAMAP" id="MF_01152">
    <property type="entry name" value="DnaJ"/>
    <property type="match status" value="1"/>
</dbReference>
<dbReference type="InterPro" id="IPR012724">
    <property type="entry name" value="DnaJ"/>
</dbReference>
<dbReference type="InterPro" id="IPR002939">
    <property type="entry name" value="DnaJ_C"/>
</dbReference>
<dbReference type="InterPro" id="IPR001623">
    <property type="entry name" value="DnaJ_domain"/>
</dbReference>
<dbReference type="InterPro" id="IPR018253">
    <property type="entry name" value="DnaJ_domain_CS"/>
</dbReference>
<dbReference type="InterPro" id="IPR008971">
    <property type="entry name" value="HSP40/DnaJ_pept-bd"/>
</dbReference>
<dbReference type="InterPro" id="IPR001305">
    <property type="entry name" value="HSP_DnaJ_Cys-rich_dom"/>
</dbReference>
<dbReference type="InterPro" id="IPR036410">
    <property type="entry name" value="HSP_DnaJ_Cys-rich_dom_sf"/>
</dbReference>
<dbReference type="InterPro" id="IPR036869">
    <property type="entry name" value="J_dom_sf"/>
</dbReference>
<dbReference type="NCBIfam" id="TIGR02349">
    <property type="entry name" value="DnaJ_bact"/>
    <property type="match status" value="1"/>
</dbReference>
<dbReference type="NCBIfam" id="NF008035">
    <property type="entry name" value="PRK10767.1"/>
    <property type="match status" value="1"/>
</dbReference>
<dbReference type="PANTHER" id="PTHR43096:SF48">
    <property type="entry name" value="CHAPERONE PROTEIN DNAJ"/>
    <property type="match status" value="1"/>
</dbReference>
<dbReference type="PANTHER" id="PTHR43096">
    <property type="entry name" value="DNAJ HOMOLOG 1, MITOCHONDRIAL-RELATED"/>
    <property type="match status" value="1"/>
</dbReference>
<dbReference type="Pfam" id="PF00226">
    <property type="entry name" value="DnaJ"/>
    <property type="match status" value="1"/>
</dbReference>
<dbReference type="Pfam" id="PF01556">
    <property type="entry name" value="DnaJ_C"/>
    <property type="match status" value="1"/>
</dbReference>
<dbReference type="Pfam" id="PF00684">
    <property type="entry name" value="DnaJ_CXXCXGXG"/>
    <property type="match status" value="1"/>
</dbReference>
<dbReference type="PRINTS" id="PR00625">
    <property type="entry name" value="JDOMAIN"/>
</dbReference>
<dbReference type="SMART" id="SM00271">
    <property type="entry name" value="DnaJ"/>
    <property type="match status" value="1"/>
</dbReference>
<dbReference type="SUPFAM" id="SSF46565">
    <property type="entry name" value="Chaperone J-domain"/>
    <property type="match status" value="1"/>
</dbReference>
<dbReference type="SUPFAM" id="SSF57938">
    <property type="entry name" value="DnaJ/Hsp40 cysteine-rich domain"/>
    <property type="match status" value="1"/>
</dbReference>
<dbReference type="SUPFAM" id="SSF49493">
    <property type="entry name" value="HSP40/DnaJ peptide-binding domain"/>
    <property type="match status" value="2"/>
</dbReference>
<dbReference type="PROSITE" id="PS00636">
    <property type="entry name" value="DNAJ_1"/>
    <property type="match status" value="1"/>
</dbReference>
<dbReference type="PROSITE" id="PS50076">
    <property type="entry name" value="DNAJ_2"/>
    <property type="match status" value="1"/>
</dbReference>
<dbReference type="PROSITE" id="PS51188">
    <property type="entry name" value="ZF_CR"/>
    <property type="match status" value="1"/>
</dbReference>
<sequence>MEQRDYYELLEVSRNASDAEIKKAYRRLAMKYHPDRNPGDTSAEEKFKEIQKAYNILSDKQKRAAYDQFGHAGVDPSMGGGPGGFGGFGGFGDVFEDIFENIFSGGRGHGRQSRGQRGADLQFNVQLTLEEAAIGKEVEITVPRHGTCTVCEGSGAKKGTSPKTCETCQGMGQVRIQQGFFSIQQTCPTCHGEGKIISDPCASCHGQGRVRESKKINVKIPAGVDNGDRVRLSGEGEAGVHGGGSGDLYVQISLKKHAIFERHENDLHCEVPISFATAALGGSIEVPTLEGRVTLKIPAETQTGKVFRLRSKGMKSVRGYGQGDLLCKVVVETPVNLSREQKELLNKLQDSLENAKGTHSPKTSSWFAGVKKFFEDMKF</sequence>
<feature type="chain" id="PRO_1000085218" description="Chaperone protein DnaJ">
    <location>
        <begin position="1"/>
        <end position="379"/>
    </location>
</feature>
<feature type="domain" description="J" evidence="1">
    <location>
        <begin position="5"/>
        <end position="70"/>
    </location>
</feature>
<feature type="repeat" description="CXXCXGXG motif">
    <location>
        <begin position="148"/>
        <end position="155"/>
    </location>
</feature>
<feature type="repeat" description="CXXCXGXG motif">
    <location>
        <begin position="165"/>
        <end position="172"/>
    </location>
</feature>
<feature type="repeat" description="CXXCXGXG motif">
    <location>
        <begin position="187"/>
        <end position="194"/>
    </location>
</feature>
<feature type="repeat" description="CXXCXGXG motif">
    <location>
        <begin position="201"/>
        <end position="208"/>
    </location>
</feature>
<feature type="zinc finger region" description="CR-type" evidence="1">
    <location>
        <begin position="135"/>
        <end position="213"/>
    </location>
</feature>
<feature type="binding site" evidence="1">
    <location>
        <position position="148"/>
    </location>
    <ligand>
        <name>Zn(2+)</name>
        <dbReference type="ChEBI" id="CHEBI:29105"/>
        <label>1</label>
    </ligand>
</feature>
<feature type="binding site" evidence="1">
    <location>
        <position position="151"/>
    </location>
    <ligand>
        <name>Zn(2+)</name>
        <dbReference type="ChEBI" id="CHEBI:29105"/>
        <label>1</label>
    </ligand>
</feature>
<feature type="binding site" evidence="1">
    <location>
        <position position="165"/>
    </location>
    <ligand>
        <name>Zn(2+)</name>
        <dbReference type="ChEBI" id="CHEBI:29105"/>
        <label>2</label>
    </ligand>
</feature>
<feature type="binding site" evidence="1">
    <location>
        <position position="168"/>
    </location>
    <ligand>
        <name>Zn(2+)</name>
        <dbReference type="ChEBI" id="CHEBI:29105"/>
        <label>2</label>
    </ligand>
</feature>
<feature type="binding site" evidence="1">
    <location>
        <position position="187"/>
    </location>
    <ligand>
        <name>Zn(2+)</name>
        <dbReference type="ChEBI" id="CHEBI:29105"/>
        <label>2</label>
    </ligand>
</feature>
<feature type="binding site" evidence="1">
    <location>
        <position position="190"/>
    </location>
    <ligand>
        <name>Zn(2+)</name>
        <dbReference type="ChEBI" id="CHEBI:29105"/>
        <label>2</label>
    </ligand>
</feature>
<feature type="binding site" evidence="1">
    <location>
        <position position="201"/>
    </location>
    <ligand>
        <name>Zn(2+)</name>
        <dbReference type="ChEBI" id="CHEBI:29105"/>
        <label>1</label>
    </ligand>
</feature>
<feature type="binding site" evidence="1">
    <location>
        <position position="204"/>
    </location>
    <ligand>
        <name>Zn(2+)</name>
        <dbReference type="ChEBI" id="CHEBI:29105"/>
        <label>1</label>
    </ligand>
</feature>
<keyword id="KW-0143">Chaperone</keyword>
<keyword id="KW-0963">Cytoplasm</keyword>
<keyword id="KW-0235">DNA replication</keyword>
<keyword id="KW-0479">Metal-binding</keyword>
<keyword id="KW-0677">Repeat</keyword>
<keyword id="KW-0346">Stress response</keyword>
<keyword id="KW-0862">Zinc</keyword>
<keyword id="KW-0863">Zinc-finger</keyword>
<protein>
    <recommendedName>
        <fullName evidence="1">Chaperone protein DnaJ</fullName>
    </recommendedName>
</protein>
<organism>
    <name type="scientific">Legionella pneumophila (strain Corby)</name>
    <dbReference type="NCBI Taxonomy" id="400673"/>
    <lineage>
        <taxon>Bacteria</taxon>
        <taxon>Pseudomonadati</taxon>
        <taxon>Pseudomonadota</taxon>
        <taxon>Gammaproteobacteria</taxon>
        <taxon>Legionellales</taxon>
        <taxon>Legionellaceae</taxon>
        <taxon>Legionella</taxon>
    </lineage>
</organism>
<accession>A5IDK7</accession>
<gene>
    <name evidence="1" type="primary">dnaJ</name>
    <name type="ordered locus">LPC_1508</name>
</gene>
<reference key="1">
    <citation type="submission" date="2006-11" db="EMBL/GenBank/DDBJ databases">
        <title>Identification and characterization of a new conjugation/ type IVA secretion system (trb/tra) of L. pneumophila Corby localized on a mobile genomic island.</title>
        <authorList>
            <person name="Gloeckner G."/>
            <person name="Albert-Weissenberger C."/>
            <person name="Weinmann E."/>
            <person name="Jacobi S."/>
            <person name="Schunder E."/>
            <person name="Steinert M."/>
            <person name="Buchrieser C."/>
            <person name="Hacker J."/>
            <person name="Heuner K."/>
        </authorList>
    </citation>
    <scope>NUCLEOTIDE SEQUENCE [LARGE SCALE GENOMIC DNA]</scope>
    <source>
        <strain>Corby</strain>
    </source>
</reference>
<name>DNAJ_LEGPC</name>
<evidence type="ECO:0000255" key="1">
    <source>
        <dbReference type="HAMAP-Rule" id="MF_01152"/>
    </source>
</evidence>
<proteinExistence type="inferred from homology"/>
<comment type="function">
    <text evidence="1">Participates actively in the response to hyperosmotic and heat shock by preventing the aggregation of stress-denatured proteins and by disaggregating proteins, also in an autonomous, DnaK-independent fashion. Unfolded proteins bind initially to DnaJ; upon interaction with the DnaJ-bound protein, DnaK hydrolyzes its bound ATP, resulting in the formation of a stable complex. GrpE releases ADP from DnaK; ATP binding to DnaK triggers the release of the substrate protein, thus completing the reaction cycle. Several rounds of ATP-dependent interactions between DnaJ, DnaK and GrpE are required for fully efficient folding. Also involved, together with DnaK and GrpE, in the DNA replication of plasmids through activation of initiation proteins.</text>
</comment>
<comment type="cofactor">
    <cofactor evidence="1">
        <name>Zn(2+)</name>
        <dbReference type="ChEBI" id="CHEBI:29105"/>
    </cofactor>
    <text evidence="1">Binds 2 Zn(2+) ions per monomer.</text>
</comment>
<comment type="subunit">
    <text evidence="1">Homodimer.</text>
</comment>
<comment type="subcellular location">
    <subcellularLocation>
        <location evidence="1">Cytoplasm</location>
    </subcellularLocation>
</comment>
<comment type="domain">
    <text evidence="1">The J domain is necessary and sufficient to stimulate DnaK ATPase activity. Zinc center 1 plays an important role in the autonomous, DnaK-independent chaperone activity of DnaJ. Zinc center 2 is essential for interaction with DnaK and for DnaJ activity.</text>
</comment>
<comment type="similarity">
    <text evidence="1">Belongs to the DnaJ family.</text>
</comment>